<protein>
    <recommendedName>
        <fullName>Non-histone chromosomal protein HMG-17</fullName>
    </recommendedName>
    <alternativeName>
        <fullName>High mobility group nucleosome-binding domain-containing protein 2</fullName>
    </alternativeName>
</protein>
<feature type="initiator methionine" description="Removed" evidence="4">
    <location>
        <position position="1"/>
    </location>
</feature>
<feature type="chain" id="PRO_0000206698" description="Non-histone chromosomal protein HMG-17">
    <location>
        <begin position="2"/>
        <end position="90"/>
    </location>
</feature>
<feature type="region of interest" description="Disordered" evidence="3">
    <location>
        <begin position="1"/>
        <end position="90"/>
    </location>
</feature>
<feature type="compositionally biased region" description="Basic and acidic residues" evidence="3">
    <location>
        <begin position="1"/>
        <end position="23"/>
    </location>
</feature>
<feature type="compositionally biased region" description="Basic and acidic residues" evidence="3">
    <location>
        <begin position="37"/>
        <end position="64"/>
    </location>
</feature>
<feature type="compositionally biased region" description="Basic and acidic residues" evidence="3">
    <location>
        <begin position="73"/>
        <end position="90"/>
    </location>
</feature>
<feature type="modified residue" description="Phosphoserine" evidence="2">
    <location>
        <position position="25"/>
    </location>
</feature>
<feature type="modified residue" description="ADP-ribosylserine; alternate" evidence="2">
    <location>
        <position position="29"/>
    </location>
</feature>
<feature type="modified residue" description="Phosphoserine; alternate" evidence="2">
    <location>
        <position position="29"/>
    </location>
</feature>
<feature type="modified residue" description="N6-acetyllysine; alternate" evidence="6">
    <location>
        <position position="82"/>
    </location>
</feature>
<feature type="cross-link" description="Glycyl lysine isopeptide (Lys-Gly) (interchain with G-Cter in SUMO2); alternate" evidence="2">
    <location>
        <position position="82"/>
    </location>
</feature>
<organism>
    <name type="scientific">Mus musculus</name>
    <name type="common">Mouse</name>
    <dbReference type="NCBI Taxonomy" id="10090"/>
    <lineage>
        <taxon>Eukaryota</taxon>
        <taxon>Metazoa</taxon>
        <taxon>Chordata</taxon>
        <taxon>Craniata</taxon>
        <taxon>Vertebrata</taxon>
        <taxon>Euteleostomi</taxon>
        <taxon>Mammalia</taxon>
        <taxon>Eutheria</taxon>
        <taxon>Euarchontoglires</taxon>
        <taxon>Glires</taxon>
        <taxon>Rodentia</taxon>
        <taxon>Myomorpha</taxon>
        <taxon>Muroidea</taxon>
        <taxon>Muridae</taxon>
        <taxon>Murinae</taxon>
        <taxon>Mus</taxon>
        <taxon>Mus</taxon>
    </lineage>
</organism>
<keyword id="KW-0007">Acetylation</keyword>
<keyword id="KW-0013">ADP-ribosylation</keyword>
<keyword id="KW-0963">Cytoplasm</keyword>
<keyword id="KW-0903">Direct protein sequencing</keyword>
<keyword id="KW-0238">DNA-binding</keyword>
<keyword id="KW-1017">Isopeptide bond</keyword>
<keyword id="KW-0539">Nucleus</keyword>
<keyword id="KW-0597">Phosphoprotein</keyword>
<keyword id="KW-1185">Reference proteome</keyword>
<keyword id="KW-0832">Ubl conjugation</keyword>
<accession>P09602</accession>
<reference key="1">
    <citation type="journal article" date="1988" name="Nucleic Acids Res.">
        <title>Mouse non-histone chromosomal protein HMG-17 cDNA sequence.</title>
        <authorList>
            <person name="Landsman D."/>
            <person name="Zavou S."/>
            <person name="Soares N."/>
            <person name="Goodwin G.H."/>
            <person name="Bustin M."/>
        </authorList>
    </citation>
    <scope>NUCLEOTIDE SEQUENCE [MRNA]</scope>
</reference>
<reference key="2">
    <citation type="journal article" date="2005" name="Science">
        <title>The transcriptional landscape of the mammalian genome.</title>
        <authorList>
            <person name="Carninci P."/>
            <person name="Kasukawa T."/>
            <person name="Katayama S."/>
            <person name="Gough J."/>
            <person name="Frith M.C."/>
            <person name="Maeda N."/>
            <person name="Oyama R."/>
            <person name="Ravasi T."/>
            <person name="Lenhard B."/>
            <person name="Wells C."/>
            <person name="Kodzius R."/>
            <person name="Shimokawa K."/>
            <person name="Bajic V.B."/>
            <person name="Brenner S.E."/>
            <person name="Batalov S."/>
            <person name="Forrest A.R."/>
            <person name="Zavolan M."/>
            <person name="Davis M.J."/>
            <person name="Wilming L.G."/>
            <person name="Aidinis V."/>
            <person name="Allen J.E."/>
            <person name="Ambesi-Impiombato A."/>
            <person name="Apweiler R."/>
            <person name="Aturaliya R.N."/>
            <person name="Bailey T.L."/>
            <person name="Bansal M."/>
            <person name="Baxter L."/>
            <person name="Beisel K.W."/>
            <person name="Bersano T."/>
            <person name="Bono H."/>
            <person name="Chalk A.M."/>
            <person name="Chiu K.P."/>
            <person name="Choudhary V."/>
            <person name="Christoffels A."/>
            <person name="Clutterbuck D.R."/>
            <person name="Crowe M.L."/>
            <person name="Dalla E."/>
            <person name="Dalrymple B.P."/>
            <person name="de Bono B."/>
            <person name="Della Gatta G."/>
            <person name="di Bernardo D."/>
            <person name="Down T."/>
            <person name="Engstrom P."/>
            <person name="Fagiolini M."/>
            <person name="Faulkner G."/>
            <person name="Fletcher C.F."/>
            <person name="Fukushima T."/>
            <person name="Furuno M."/>
            <person name="Futaki S."/>
            <person name="Gariboldi M."/>
            <person name="Georgii-Hemming P."/>
            <person name="Gingeras T.R."/>
            <person name="Gojobori T."/>
            <person name="Green R.E."/>
            <person name="Gustincich S."/>
            <person name="Harbers M."/>
            <person name="Hayashi Y."/>
            <person name="Hensch T.K."/>
            <person name="Hirokawa N."/>
            <person name="Hill D."/>
            <person name="Huminiecki L."/>
            <person name="Iacono M."/>
            <person name="Ikeo K."/>
            <person name="Iwama A."/>
            <person name="Ishikawa T."/>
            <person name="Jakt M."/>
            <person name="Kanapin A."/>
            <person name="Katoh M."/>
            <person name="Kawasawa Y."/>
            <person name="Kelso J."/>
            <person name="Kitamura H."/>
            <person name="Kitano H."/>
            <person name="Kollias G."/>
            <person name="Krishnan S.P."/>
            <person name="Kruger A."/>
            <person name="Kummerfeld S.K."/>
            <person name="Kurochkin I.V."/>
            <person name="Lareau L.F."/>
            <person name="Lazarevic D."/>
            <person name="Lipovich L."/>
            <person name="Liu J."/>
            <person name="Liuni S."/>
            <person name="McWilliam S."/>
            <person name="Madan Babu M."/>
            <person name="Madera M."/>
            <person name="Marchionni L."/>
            <person name="Matsuda H."/>
            <person name="Matsuzawa S."/>
            <person name="Miki H."/>
            <person name="Mignone F."/>
            <person name="Miyake S."/>
            <person name="Morris K."/>
            <person name="Mottagui-Tabar S."/>
            <person name="Mulder N."/>
            <person name="Nakano N."/>
            <person name="Nakauchi H."/>
            <person name="Ng P."/>
            <person name="Nilsson R."/>
            <person name="Nishiguchi S."/>
            <person name="Nishikawa S."/>
            <person name="Nori F."/>
            <person name="Ohara O."/>
            <person name="Okazaki Y."/>
            <person name="Orlando V."/>
            <person name="Pang K.C."/>
            <person name="Pavan W.J."/>
            <person name="Pavesi G."/>
            <person name="Pesole G."/>
            <person name="Petrovsky N."/>
            <person name="Piazza S."/>
            <person name="Reed J."/>
            <person name="Reid J.F."/>
            <person name="Ring B.Z."/>
            <person name="Ringwald M."/>
            <person name="Rost B."/>
            <person name="Ruan Y."/>
            <person name="Salzberg S.L."/>
            <person name="Sandelin A."/>
            <person name="Schneider C."/>
            <person name="Schoenbach C."/>
            <person name="Sekiguchi K."/>
            <person name="Semple C.A."/>
            <person name="Seno S."/>
            <person name="Sessa L."/>
            <person name="Sheng Y."/>
            <person name="Shibata Y."/>
            <person name="Shimada H."/>
            <person name="Shimada K."/>
            <person name="Silva D."/>
            <person name="Sinclair B."/>
            <person name="Sperling S."/>
            <person name="Stupka E."/>
            <person name="Sugiura K."/>
            <person name="Sultana R."/>
            <person name="Takenaka Y."/>
            <person name="Taki K."/>
            <person name="Tammoja K."/>
            <person name="Tan S.L."/>
            <person name="Tang S."/>
            <person name="Taylor M.S."/>
            <person name="Tegner J."/>
            <person name="Teichmann S.A."/>
            <person name="Ueda H.R."/>
            <person name="van Nimwegen E."/>
            <person name="Verardo R."/>
            <person name="Wei C.L."/>
            <person name="Yagi K."/>
            <person name="Yamanishi H."/>
            <person name="Zabarovsky E."/>
            <person name="Zhu S."/>
            <person name="Zimmer A."/>
            <person name="Hide W."/>
            <person name="Bult C."/>
            <person name="Grimmond S.M."/>
            <person name="Teasdale R.D."/>
            <person name="Liu E.T."/>
            <person name="Brusic V."/>
            <person name="Quackenbush J."/>
            <person name="Wahlestedt C."/>
            <person name="Mattick J.S."/>
            <person name="Hume D.A."/>
            <person name="Kai C."/>
            <person name="Sasaki D."/>
            <person name="Tomaru Y."/>
            <person name="Fukuda S."/>
            <person name="Kanamori-Katayama M."/>
            <person name="Suzuki M."/>
            <person name="Aoki J."/>
            <person name="Arakawa T."/>
            <person name="Iida J."/>
            <person name="Imamura K."/>
            <person name="Itoh M."/>
            <person name="Kato T."/>
            <person name="Kawaji H."/>
            <person name="Kawagashira N."/>
            <person name="Kawashima T."/>
            <person name="Kojima M."/>
            <person name="Kondo S."/>
            <person name="Konno H."/>
            <person name="Nakano K."/>
            <person name="Ninomiya N."/>
            <person name="Nishio T."/>
            <person name="Okada M."/>
            <person name="Plessy C."/>
            <person name="Shibata K."/>
            <person name="Shiraki T."/>
            <person name="Suzuki S."/>
            <person name="Tagami M."/>
            <person name="Waki K."/>
            <person name="Watahiki A."/>
            <person name="Okamura-Oho Y."/>
            <person name="Suzuki H."/>
            <person name="Kawai J."/>
            <person name="Hayashizaki Y."/>
        </authorList>
    </citation>
    <scope>NUCLEOTIDE SEQUENCE [LARGE SCALE MRNA]</scope>
    <source>
        <strain>C57BL/6J</strain>
        <tissue>Kidney</tissue>
    </source>
</reference>
<reference key="3">
    <citation type="journal article" date="2004" name="Genome Res.">
        <title>The status, quality, and expansion of the NIH full-length cDNA project: the Mammalian Gene Collection (MGC).</title>
        <authorList>
            <consortium name="The MGC Project Team"/>
        </authorList>
    </citation>
    <scope>NUCLEOTIDE SEQUENCE [LARGE SCALE MRNA]</scope>
    <source>
        <strain>FVB/N</strain>
        <tissue>Colon</tissue>
    </source>
</reference>
<reference key="4">
    <citation type="journal article" date="1988" name="FEBS Lett.">
        <title>Selective decrease in low-Mr HMG proteins HMG I and HMG Y during differentiation of mouse teratocarcinoma cells.</title>
        <authorList>
            <person name="Vartiainen E."/>
            <person name="Palvimo J."/>
            <person name="Mahonen A."/>
            <person name="Linnala-Kankkunen A."/>
            <person name="Maeenpaeae P.H."/>
        </authorList>
    </citation>
    <scope>PROTEIN SEQUENCE OF 2-21</scope>
</reference>
<reference key="5">
    <citation type="journal article" date="2013" name="Mol. Cell">
        <title>SIRT5-mediated lysine desuccinylation impacts diverse metabolic pathways.</title>
        <authorList>
            <person name="Park J."/>
            <person name="Chen Y."/>
            <person name="Tishkoff D.X."/>
            <person name="Peng C."/>
            <person name="Tan M."/>
            <person name="Dai L."/>
            <person name="Xie Z."/>
            <person name="Zhang Y."/>
            <person name="Zwaans B.M."/>
            <person name="Skinner M.E."/>
            <person name="Lombard D.B."/>
            <person name="Zhao Y."/>
        </authorList>
    </citation>
    <scope>ACETYLATION [LARGE SCALE ANALYSIS] AT LYS-82</scope>
    <scope>IDENTIFICATION BY MASS SPECTROMETRY [LARGE SCALE ANALYSIS]</scope>
    <source>
        <tissue>Embryonic fibroblast</tissue>
    </source>
</reference>
<sequence>MPKRKAEGDAKGDKTKVKDEPQRRSARLSAKPAPPKPEPKPKKAPAKKGEKVPKGKKGKADAGKDANNPAENGDAKTDQAQKAEGAGDAK</sequence>
<name>HMGN2_MOUSE</name>
<comment type="function">
    <text evidence="1">Binds to the inner side of the nucleosomal DNA thus altering the interaction between the DNA and the histone octamer. May be involved in the process which maintains transcribable genes in a unique chromatin conformation (By similarity).</text>
</comment>
<comment type="subcellular location">
    <subcellularLocation>
        <location evidence="1">Nucleus</location>
    </subcellularLocation>
    <subcellularLocation>
        <location evidence="1">Cytoplasm</location>
    </subcellularLocation>
    <text evidence="1">Cytoplasmic enrichment upon phosphorylation.</text>
</comment>
<comment type="PTM">
    <text evidence="1">Phosphorylation favors cytoplasmic localization.</text>
</comment>
<comment type="similarity">
    <text evidence="5">Belongs to the HMGN family.</text>
</comment>
<proteinExistence type="evidence at protein level"/>
<evidence type="ECO:0000250" key="1"/>
<evidence type="ECO:0000250" key="2">
    <source>
        <dbReference type="UniProtKB" id="P05204"/>
    </source>
</evidence>
<evidence type="ECO:0000256" key="3">
    <source>
        <dbReference type="SAM" id="MobiDB-lite"/>
    </source>
</evidence>
<evidence type="ECO:0000269" key="4">
    <source>
    </source>
</evidence>
<evidence type="ECO:0000305" key="5"/>
<evidence type="ECO:0007744" key="6">
    <source>
    </source>
</evidence>
<gene>
    <name type="primary">Hmgn2</name>
    <name type="synonym">Hmg-17</name>
    <name type="synonym">Hmg17</name>
</gene>
<dbReference type="EMBL" id="X12944">
    <property type="protein sequence ID" value="CAA31404.1"/>
    <property type="molecule type" value="mRNA"/>
</dbReference>
<dbReference type="EMBL" id="AK002374">
    <property type="protein sequence ID" value="BAB22051.1"/>
    <property type="molecule type" value="mRNA"/>
</dbReference>
<dbReference type="EMBL" id="AK078413">
    <property type="protein sequence ID" value="BAC37262.1"/>
    <property type="molecule type" value="mRNA"/>
</dbReference>
<dbReference type="EMBL" id="BC084680">
    <property type="protein sequence ID" value="AAH84680.1"/>
    <property type="molecule type" value="mRNA"/>
</dbReference>
<dbReference type="CCDS" id="CCDS18759.1"/>
<dbReference type="PIR" id="S01946">
    <property type="entry name" value="S01946"/>
</dbReference>
<dbReference type="RefSeq" id="NP_058653.1">
    <property type="nucleotide sequence ID" value="NM_016957.3"/>
</dbReference>
<dbReference type="BioGRID" id="200333">
    <property type="interactions" value="3"/>
</dbReference>
<dbReference type="FunCoup" id="P09602">
    <property type="interactions" value="2349"/>
</dbReference>
<dbReference type="STRING" id="10090.ENSMUSP00000075031"/>
<dbReference type="iPTMnet" id="P09602"/>
<dbReference type="PhosphoSitePlus" id="P09602"/>
<dbReference type="jPOST" id="P09602"/>
<dbReference type="PaxDb" id="10090-ENSMUSP00000075031"/>
<dbReference type="ProteomicsDB" id="273368"/>
<dbReference type="Pumba" id="P09602"/>
<dbReference type="DNASU" id="15331"/>
<dbReference type="Ensembl" id="ENSMUST00000075602.8">
    <property type="protein sequence ID" value="ENSMUSP00000075031.7"/>
    <property type="gene ID" value="ENSMUSG00000070713.6"/>
</dbReference>
<dbReference type="Ensembl" id="ENSMUST00000102552.8">
    <property type="protein sequence ID" value="ENSMUSP00000099612.2"/>
    <property type="gene ID" value="ENSMUSG00000003038.16"/>
</dbReference>
<dbReference type="Ensembl" id="ENSMUST00000102553.11">
    <property type="protein sequence ID" value="ENSMUSP00000099613.5"/>
    <property type="gene ID" value="ENSMUSG00000003038.16"/>
</dbReference>
<dbReference type="GeneID" id="15331"/>
<dbReference type="KEGG" id="mmu:15331"/>
<dbReference type="UCSC" id="uc008vdq.1">
    <property type="organism name" value="mouse"/>
</dbReference>
<dbReference type="AGR" id="MGI:96136"/>
<dbReference type="CTD" id="3151"/>
<dbReference type="MGI" id="MGI:96136">
    <property type="gene designation" value="Hmgn2"/>
</dbReference>
<dbReference type="VEuPathDB" id="HostDB:ENSMUSG00000003038"/>
<dbReference type="VEuPathDB" id="HostDB:ENSMUSG00000070713"/>
<dbReference type="eggNOG" id="ENOG502S5FK">
    <property type="taxonomic scope" value="Eukaryota"/>
</dbReference>
<dbReference type="GeneTree" id="ENSGT00950000182802"/>
<dbReference type="HOGENOM" id="CLU_141985_0_2_1"/>
<dbReference type="InParanoid" id="P09602"/>
<dbReference type="OMA" id="SEQQHCR"/>
<dbReference type="PhylomeDB" id="P09602"/>
<dbReference type="BioGRID-ORCS" id="15331">
    <property type="hits" value="3 hits in 79 CRISPR screens"/>
</dbReference>
<dbReference type="ChiTaRS" id="Hmgn2">
    <property type="organism name" value="mouse"/>
</dbReference>
<dbReference type="PRO" id="PR:P09602"/>
<dbReference type="Proteomes" id="UP000000589">
    <property type="component" value="Chromosome 4"/>
</dbReference>
<dbReference type="Proteomes" id="UP000000589">
    <property type="component" value="Chromosome 8"/>
</dbReference>
<dbReference type="RNAct" id="P09602">
    <property type="molecule type" value="protein"/>
</dbReference>
<dbReference type="Bgee" id="ENSMUSG00000003038">
    <property type="expression patterns" value="Expressed in embryonic facial prominence and 118 other cell types or tissues"/>
</dbReference>
<dbReference type="ExpressionAtlas" id="P09602">
    <property type="expression patterns" value="baseline and differential"/>
</dbReference>
<dbReference type="GO" id="GO:0000785">
    <property type="term" value="C:chromatin"/>
    <property type="evidence" value="ECO:0007669"/>
    <property type="project" value="InterPro"/>
</dbReference>
<dbReference type="GO" id="GO:0005737">
    <property type="term" value="C:cytoplasm"/>
    <property type="evidence" value="ECO:0007669"/>
    <property type="project" value="UniProtKB-SubCell"/>
</dbReference>
<dbReference type="GO" id="GO:0001674">
    <property type="term" value="C:female germ cell nucleus"/>
    <property type="evidence" value="ECO:0000314"/>
    <property type="project" value="MGI"/>
</dbReference>
<dbReference type="GO" id="GO:0031492">
    <property type="term" value="F:nucleosomal DNA binding"/>
    <property type="evidence" value="ECO:0007669"/>
    <property type="project" value="InterPro"/>
</dbReference>
<dbReference type="GO" id="GO:0000122">
    <property type="term" value="P:negative regulation of transcription by RNA polymerase II"/>
    <property type="evidence" value="ECO:0000315"/>
    <property type="project" value="MGI"/>
</dbReference>
<dbReference type="GO" id="GO:0040034">
    <property type="term" value="P:regulation of development, heterochronic"/>
    <property type="evidence" value="ECO:0000316"/>
    <property type="project" value="MGI"/>
</dbReference>
<dbReference type="GO" id="GO:0006357">
    <property type="term" value="P:regulation of transcription by RNA polymerase II"/>
    <property type="evidence" value="ECO:0000315"/>
    <property type="project" value="MGI"/>
</dbReference>
<dbReference type="InterPro" id="IPR000079">
    <property type="entry name" value="HMGN_fam"/>
</dbReference>
<dbReference type="PANTHER" id="PTHR23087:SF13">
    <property type="entry name" value="NON-HISTONE CHROMOSOMAL PROTEIN HMG-17"/>
    <property type="match status" value="1"/>
</dbReference>
<dbReference type="PANTHER" id="PTHR23087">
    <property type="entry name" value="NONHISTONE CHROMOSOMAL PROTEIN HMG"/>
    <property type="match status" value="1"/>
</dbReference>
<dbReference type="Pfam" id="PF01101">
    <property type="entry name" value="HMG14_17"/>
    <property type="match status" value="1"/>
</dbReference>
<dbReference type="PRINTS" id="PR00925">
    <property type="entry name" value="NONHISHMG17"/>
</dbReference>
<dbReference type="SMART" id="SM00527">
    <property type="entry name" value="HMG17"/>
    <property type="match status" value="1"/>
</dbReference>
<dbReference type="PROSITE" id="PS00355">
    <property type="entry name" value="HMG14_17"/>
    <property type="match status" value="1"/>
</dbReference>